<accession>Q6IP59</accession>
<gene>
    <name type="primary">slc44a2</name>
    <name type="synonym">ctl2</name>
</gene>
<name>CTL2_XENLA</name>
<organism>
    <name type="scientific">Xenopus laevis</name>
    <name type="common">African clawed frog</name>
    <dbReference type="NCBI Taxonomy" id="8355"/>
    <lineage>
        <taxon>Eukaryota</taxon>
        <taxon>Metazoa</taxon>
        <taxon>Chordata</taxon>
        <taxon>Craniata</taxon>
        <taxon>Vertebrata</taxon>
        <taxon>Euteleostomi</taxon>
        <taxon>Amphibia</taxon>
        <taxon>Batrachia</taxon>
        <taxon>Anura</taxon>
        <taxon>Pipoidea</taxon>
        <taxon>Pipidae</taxon>
        <taxon>Xenopodinae</taxon>
        <taxon>Xenopus</taxon>
        <taxon>Xenopus</taxon>
    </lineage>
</organism>
<proteinExistence type="evidence at transcript level"/>
<protein>
    <recommendedName>
        <fullName>Choline transporter-like protein 2</fullName>
    </recommendedName>
    <alternativeName>
        <fullName>Solute carrier family 44 member 2</fullName>
    </alternativeName>
</protein>
<evidence type="ECO:0000250" key="1">
    <source>
        <dbReference type="UniProtKB" id="B4F795"/>
    </source>
</evidence>
<evidence type="ECO:0000250" key="2">
    <source>
        <dbReference type="UniProtKB" id="Q8IWA5"/>
    </source>
</evidence>
<evidence type="ECO:0000255" key="3"/>
<evidence type="ECO:0000305" key="4"/>
<reference key="1">
    <citation type="submission" date="2004-06" db="EMBL/GenBank/DDBJ databases">
        <authorList>
            <consortium name="NIH - Xenopus Gene Collection (XGC) project"/>
        </authorList>
    </citation>
    <scope>NUCLEOTIDE SEQUENCE [LARGE SCALE MRNA]</scope>
    <source>
        <tissue>Embryo</tissue>
    </source>
</reference>
<comment type="function">
    <text evidence="2">Choline/H+ antiporter, mainly in mitochodria. Also acts as a low-affinity ethanolamine/H+ antiporter, regulating the supply of extracellular ethanolamine (Etn) for the CDP-Etn pathway, redistribute intracellular Etn and balance the CDP-Cho and CDP-Etn arms of the Kennedy pathway.</text>
</comment>
<comment type="catalytic activity">
    <reaction evidence="2">
        <text>choline(out) + n H(+)(in) = choline(in) + n H(+)(out)</text>
        <dbReference type="Rhea" id="RHEA:75463"/>
        <dbReference type="ChEBI" id="CHEBI:15354"/>
        <dbReference type="ChEBI" id="CHEBI:15378"/>
    </reaction>
</comment>
<comment type="catalytic activity">
    <reaction evidence="2">
        <text>ethanolamine(out) + n H(+)(in) = ethanolamine(in) + n H(+)(out)</text>
        <dbReference type="Rhea" id="RHEA:75467"/>
        <dbReference type="ChEBI" id="CHEBI:15378"/>
        <dbReference type="ChEBI" id="CHEBI:57603"/>
    </reaction>
</comment>
<comment type="subcellular location">
    <subcellularLocation>
        <location evidence="2">Cell membrane</location>
        <topology evidence="3">Multi-pass membrane protein</topology>
    </subcellularLocation>
    <subcellularLocation>
        <location evidence="2">Mitochondrion outer membrane</location>
        <topology evidence="3">Multi-pass membrane protein</topology>
    </subcellularLocation>
    <text evidence="1">Mainly expressed in mitochondria.</text>
</comment>
<comment type="similarity">
    <text evidence="4">Belongs to the CTL (choline transporter-like) family.</text>
</comment>
<sequence>MEDDGKSPPDSAYGEPKKYDPNFKGPIQNRGCTDILCCILIVLGIIAYVAVGIVAWTYGDPRKVIYPTDSKGQFCGQVGTPNEKKPFLFYFNIMKCASPLVLLQFQCPTTQICVENCPDRFLTYLSVATTQQNFDYYKQFCRDGFNNFTKSPVEVLRDRDCPAMITPSKPFTRRCFPAINTQKGVVMVGNSTTFDDGRGDKQRNVTDLLEGAKKANVVLEARQVAMKIFEDYTVSWYWIIIGLIIAMVISLIFVVLLRFLAGIMVWVMIVLVIAVMGYGIFHCYMEYARLKGQSGSDVTLKDIGFQTDIRVYLHLRQTWLAFMIILCILEVIVILLLIFLRKRIMIAIALIKEASRAVGFVMSSLVFPLFTFLLVCLCIAYWAITAVFLSTSNEAVYKVFNETQCDFSGNTCNPETFNTTNVTRVCPDATCQFAFYGGETYYHKYLIVFQIYNAFMFLWLANFVIALGQVTLAGAFASYYWAFKKPDDMPAFPIFSSLGRALRYHTGSLAFGSLILAIVQMIRILLEYLDHKLKGADNKCARFLLCCLKCCFWCLEKFIKFLNRNAYIMIAIYGTNFCTSARNAFFLLMRNIIRVAVLDKVTDFLLFLGKLLVVGCVGILAFFFFSRRIQIVQDTAPTLNYYWVPILTVILGSYLIAHGFFSVYGMCVDTLFLCFLEDLERNDGSTERPYFMSGSLQKLLNKSNQTKPDK</sequence>
<feature type="chain" id="PRO_0000359718" description="Choline transporter-like protein 2">
    <location>
        <begin position="1"/>
        <end position="710"/>
    </location>
</feature>
<feature type="topological domain" description="Cytoplasmic" evidence="3">
    <location>
        <begin position="1"/>
        <end position="34"/>
    </location>
</feature>
<feature type="transmembrane region" description="Helical" evidence="3">
    <location>
        <begin position="35"/>
        <end position="55"/>
    </location>
</feature>
<feature type="topological domain" description="Extracellular" evidence="3">
    <location>
        <begin position="56"/>
        <end position="236"/>
    </location>
</feature>
<feature type="transmembrane region" description="Helical" evidence="3">
    <location>
        <begin position="237"/>
        <end position="257"/>
    </location>
</feature>
<feature type="topological domain" description="Cytoplasmic" evidence="3">
    <location>
        <begin position="258"/>
        <end position="260"/>
    </location>
</feature>
<feature type="transmembrane region" description="Helical" evidence="3">
    <location>
        <begin position="261"/>
        <end position="281"/>
    </location>
</feature>
<feature type="topological domain" description="Extracellular" evidence="3">
    <location>
        <begin position="282"/>
        <end position="319"/>
    </location>
</feature>
<feature type="transmembrane region" description="Helical" evidence="3">
    <location>
        <begin position="320"/>
        <end position="340"/>
    </location>
</feature>
<feature type="topological domain" description="Cytoplasmic" evidence="3">
    <location>
        <begin position="341"/>
        <end position="368"/>
    </location>
</feature>
<feature type="transmembrane region" description="Helical" evidence="3">
    <location>
        <begin position="369"/>
        <end position="389"/>
    </location>
</feature>
<feature type="topological domain" description="Extracellular" evidence="3">
    <location>
        <begin position="390"/>
        <end position="458"/>
    </location>
</feature>
<feature type="transmembrane region" description="Helical" evidence="3">
    <location>
        <begin position="459"/>
        <end position="481"/>
    </location>
</feature>
<feature type="topological domain" description="Cytoplasmic" evidence="3">
    <location>
        <begin position="482"/>
        <end position="508"/>
    </location>
</feature>
<feature type="transmembrane region" description="Helical" evidence="3">
    <location>
        <begin position="509"/>
        <end position="529"/>
    </location>
</feature>
<feature type="topological domain" description="Extracellular" evidence="3">
    <location>
        <begin position="530"/>
        <end position="567"/>
    </location>
</feature>
<feature type="transmembrane region" description="Helical" evidence="3">
    <location>
        <begin position="568"/>
        <end position="588"/>
    </location>
</feature>
<feature type="topological domain" description="Cytoplasmic" evidence="3">
    <location>
        <begin position="589"/>
        <end position="603"/>
    </location>
</feature>
<feature type="transmembrane region" description="Helical" evidence="3">
    <location>
        <begin position="604"/>
        <end position="624"/>
    </location>
</feature>
<feature type="topological domain" description="Extracellular" evidence="3">
    <location>
        <begin position="625"/>
        <end position="642"/>
    </location>
</feature>
<feature type="transmembrane region" description="Helical" evidence="3">
    <location>
        <begin position="643"/>
        <end position="663"/>
    </location>
</feature>
<feature type="topological domain" description="Cytoplasmic" evidence="3">
    <location>
        <begin position="664"/>
        <end position="710"/>
    </location>
</feature>
<feature type="glycosylation site" description="N-linked (GlcNAc...) asparagine" evidence="3">
    <location>
        <position position="147"/>
    </location>
</feature>
<feature type="glycosylation site" description="N-linked (GlcNAc...) asparagine" evidence="3">
    <location>
        <position position="190"/>
    </location>
</feature>
<feature type="glycosylation site" description="N-linked (GlcNAc...) asparagine" evidence="3">
    <location>
        <position position="204"/>
    </location>
</feature>
<feature type="glycosylation site" description="N-linked (GlcNAc...) asparagine" evidence="3">
    <location>
        <position position="401"/>
    </location>
</feature>
<feature type="glycosylation site" description="N-linked (GlcNAc...) asparagine" evidence="3">
    <location>
        <position position="418"/>
    </location>
</feature>
<feature type="glycosylation site" description="N-linked (GlcNAc...) asparagine" evidence="3">
    <location>
        <position position="421"/>
    </location>
</feature>
<keyword id="KW-0050">Antiport</keyword>
<keyword id="KW-1003">Cell membrane</keyword>
<keyword id="KW-0325">Glycoprotein</keyword>
<keyword id="KW-0472">Membrane</keyword>
<keyword id="KW-0496">Mitochondrion</keyword>
<keyword id="KW-1000">Mitochondrion outer membrane</keyword>
<keyword id="KW-0597">Phosphoprotein</keyword>
<keyword id="KW-1185">Reference proteome</keyword>
<keyword id="KW-0812">Transmembrane</keyword>
<keyword id="KW-1133">Transmembrane helix</keyword>
<keyword id="KW-0813">Transport</keyword>
<dbReference type="EMBL" id="BC072059">
    <property type="protein sequence ID" value="AAH72059.1"/>
    <property type="molecule type" value="mRNA"/>
</dbReference>
<dbReference type="RefSeq" id="NP_001085138.1">
    <property type="nucleotide sequence ID" value="NM_001091669.1"/>
</dbReference>
<dbReference type="SMR" id="Q6IP59"/>
<dbReference type="GlyCosmos" id="Q6IP59">
    <property type="glycosylation" value="6 sites, No reported glycans"/>
</dbReference>
<dbReference type="DNASU" id="432216"/>
<dbReference type="GeneID" id="432216"/>
<dbReference type="KEGG" id="xla:432216"/>
<dbReference type="AGR" id="Xenbase:XB-GENE-957801"/>
<dbReference type="CTD" id="432216"/>
<dbReference type="Xenbase" id="XB-GENE-957801">
    <property type="gene designation" value="slc44a2.L"/>
</dbReference>
<dbReference type="OrthoDB" id="420519at2759"/>
<dbReference type="Proteomes" id="UP000186698">
    <property type="component" value="Chromosome 3L"/>
</dbReference>
<dbReference type="Bgee" id="432216">
    <property type="expression patterns" value="Expressed in egg cell and 19 other cell types or tissues"/>
</dbReference>
<dbReference type="GO" id="GO:0016020">
    <property type="term" value="C:membrane"/>
    <property type="evidence" value="ECO:0000318"/>
    <property type="project" value="GO_Central"/>
</dbReference>
<dbReference type="GO" id="GO:0005741">
    <property type="term" value="C:mitochondrial outer membrane"/>
    <property type="evidence" value="ECO:0000250"/>
    <property type="project" value="UniProtKB"/>
</dbReference>
<dbReference type="GO" id="GO:0005886">
    <property type="term" value="C:plasma membrane"/>
    <property type="evidence" value="ECO:0000250"/>
    <property type="project" value="UniProtKB"/>
</dbReference>
<dbReference type="GO" id="GO:0015297">
    <property type="term" value="F:antiporter activity"/>
    <property type="evidence" value="ECO:0007669"/>
    <property type="project" value="UniProtKB-KW"/>
</dbReference>
<dbReference type="GO" id="GO:0015220">
    <property type="term" value="F:choline transmembrane transporter activity"/>
    <property type="evidence" value="ECO:0000250"/>
    <property type="project" value="UniProtKB"/>
</dbReference>
<dbReference type="GO" id="GO:0034228">
    <property type="term" value="F:ethanolamine transmembrane transporter activity"/>
    <property type="evidence" value="ECO:0000250"/>
    <property type="project" value="UniProtKB"/>
</dbReference>
<dbReference type="GO" id="GO:0022857">
    <property type="term" value="F:transmembrane transporter activity"/>
    <property type="evidence" value="ECO:0000318"/>
    <property type="project" value="GO_Central"/>
</dbReference>
<dbReference type="GO" id="GO:0015871">
    <property type="term" value="P:choline transport"/>
    <property type="evidence" value="ECO:0000250"/>
    <property type="project" value="UniProtKB"/>
</dbReference>
<dbReference type="GO" id="GO:0034229">
    <property type="term" value="P:ethanolamine transport"/>
    <property type="evidence" value="ECO:0000250"/>
    <property type="project" value="UniProtKB"/>
</dbReference>
<dbReference type="GO" id="GO:0055085">
    <property type="term" value="P:transmembrane transport"/>
    <property type="evidence" value="ECO:0000318"/>
    <property type="project" value="GO_Central"/>
</dbReference>
<dbReference type="InterPro" id="IPR007603">
    <property type="entry name" value="Choline_transptr-like"/>
</dbReference>
<dbReference type="PANTHER" id="PTHR12385">
    <property type="entry name" value="CHOLINE TRANSPORTER-LIKE (SLC FAMILY 44)"/>
    <property type="match status" value="1"/>
</dbReference>
<dbReference type="PANTHER" id="PTHR12385:SF34">
    <property type="entry name" value="CHOLINE TRANSPORTER-LIKE PROTEIN 2"/>
    <property type="match status" value="1"/>
</dbReference>
<dbReference type="Pfam" id="PF04515">
    <property type="entry name" value="Choline_transpo"/>
    <property type="match status" value="1"/>
</dbReference>